<dbReference type="EC" id="6.3.4.20" evidence="1"/>
<dbReference type="EMBL" id="CP001050">
    <property type="protein sequence ID" value="ACF28873.1"/>
    <property type="molecule type" value="Genomic_DNA"/>
</dbReference>
<dbReference type="RefSeq" id="WP_003690590.1">
    <property type="nucleotide sequence ID" value="NC_011035.1"/>
</dbReference>
<dbReference type="SMR" id="B4RQ61"/>
<dbReference type="GeneID" id="66752395"/>
<dbReference type="KEGG" id="ngk:NGK_0175"/>
<dbReference type="HOGENOM" id="CLU_081854_0_0_4"/>
<dbReference type="UniPathway" id="UPA00391"/>
<dbReference type="Proteomes" id="UP000002564">
    <property type="component" value="Chromosome"/>
</dbReference>
<dbReference type="GO" id="GO:0005524">
    <property type="term" value="F:ATP binding"/>
    <property type="evidence" value="ECO:0007669"/>
    <property type="project" value="UniProtKB-UniRule"/>
</dbReference>
<dbReference type="GO" id="GO:0016879">
    <property type="term" value="F:ligase activity, forming carbon-nitrogen bonds"/>
    <property type="evidence" value="ECO:0007669"/>
    <property type="project" value="UniProtKB-UniRule"/>
</dbReference>
<dbReference type="GO" id="GO:0008270">
    <property type="term" value="F:zinc ion binding"/>
    <property type="evidence" value="ECO:0007669"/>
    <property type="project" value="UniProtKB-UniRule"/>
</dbReference>
<dbReference type="GO" id="GO:0008616">
    <property type="term" value="P:queuosine biosynthetic process"/>
    <property type="evidence" value="ECO:0007669"/>
    <property type="project" value="UniProtKB-UniRule"/>
</dbReference>
<dbReference type="CDD" id="cd01995">
    <property type="entry name" value="QueC-like"/>
    <property type="match status" value="1"/>
</dbReference>
<dbReference type="FunFam" id="3.40.50.620:FF:000017">
    <property type="entry name" value="7-cyano-7-deazaguanine synthase"/>
    <property type="match status" value="1"/>
</dbReference>
<dbReference type="Gene3D" id="3.40.50.620">
    <property type="entry name" value="HUPs"/>
    <property type="match status" value="1"/>
</dbReference>
<dbReference type="HAMAP" id="MF_01633">
    <property type="entry name" value="QueC"/>
    <property type="match status" value="1"/>
</dbReference>
<dbReference type="InterPro" id="IPR018317">
    <property type="entry name" value="QueC"/>
</dbReference>
<dbReference type="InterPro" id="IPR014729">
    <property type="entry name" value="Rossmann-like_a/b/a_fold"/>
</dbReference>
<dbReference type="NCBIfam" id="TIGR00364">
    <property type="entry name" value="7-cyano-7-deazaguanine synthase QueC"/>
    <property type="match status" value="1"/>
</dbReference>
<dbReference type="PANTHER" id="PTHR42914">
    <property type="entry name" value="7-CYANO-7-DEAZAGUANINE SYNTHASE"/>
    <property type="match status" value="1"/>
</dbReference>
<dbReference type="PANTHER" id="PTHR42914:SF1">
    <property type="entry name" value="7-CYANO-7-DEAZAGUANINE SYNTHASE"/>
    <property type="match status" value="1"/>
</dbReference>
<dbReference type="Pfam" id="PF06508">
    <property type="entry name" value="QueC"/>
    <property type="match status" value="1"/>
</dbReference>
<dbReference type="PIRSF" id="PIRSF006293">
    <property type="entry name" value="ExsB"/>
    <property type="match status" value="1"/>
</dbReference>
<dbReference type="SUPFAM" id="SSF52402">
    <property type="entry name" value="Adenine nucleotide alpha hydrolases-like"/>
    <property type="match status" value="1"/>
</dbReference>
<reference key="1">
    <citation type="journal article" date="2008" name="J. Bacteriol.">
        <title>Complete genome sequence of Neisseria gonorrhoeae NCCP11945.</title>
        <authorList>
            <person name="Chung G.T."/>
            <person name="Yoo J.S."/>
            <person name="Oh H.B."/>
            <person name="Lee Y.S."/>
            <person name="Cha S.H."/>
            <person name="Kim S.J."/>
            <person name="Yoo C.K."/>
        </authorList>
    </citation>
    <scope>NUCLEOTIDE SEQUENCE [LARGE SCALE GENOMIC DNA]</scope>
    <source>
        <strain>NCCP11945</strain>
    </source>
</reference>
<evidence type="ECO:0000255" key="1">
    <source>
        <dbReference type="HAMAP-Rule" id="MF_01633"/>
    </source>
</evidence>
<sequence length="219" mass="24313">MSNQKALVIFSGGQDSTTCLIQAIQTYGRENVQAITFRYGQRHAVELERAEWIAQDLGVSQTVLDLSLMRQITHNALMDETAAIETADNGVPNTFVDGRNALFLLYAAIFAKGQGIRHIIAGVCETDFSGYPDCRGVFVKSMNVTLNLAMDYDFQIHTPLMYLTKAQTWALADEMGVLDYIREQTHTCYKGIVGGCRECPSCILRERGLAECLESKKAV</sequence>
<name>QUEC_NEIG2</name>
<feature type="chain" id="PRO_1000186615" description="7-cyano-7-deazaguanine synthase">
    <location>
        <begin position="1"/>
        <end position="219"/>
    </location>
</feature>
<feature type="binding site" evidence="1">
    <location>
        <begin position="10"/>
        <end position="20"/>
    </location>
    <ligand>
        <name>ATP</name>
        <dbReference type="ChEBI" id="CHEBI:30616"/>
    </ligand>
</feature>
<feature type="binding site" evidence="1">
    <location>
        <position position="188"/>
    </location>
    <ligand>
        <name>Zn(2+)</name>
        <dbReference type="ChEBI" id="CHEBI:29105"/>
    </ligand>
</feature>
<feature type="binding site" evidence="1">
    <location>
        <position position="196"/>
    </location>
    <ligand>
        <name>Zn(2+)</name>
        <dbReference type="ChEBI" id="CHEBI:29105"/>
    </ligand>
</feature>
<feature type="binding site" evidence="1">
    <location>
        <position position="199"/>
    </location>
    <ligand>
        <name>Zn(2+)</name>
        <dbReference type="ChEBI" id="CHEBI:29105"/>
    </ligand>
</feature>
<feature type="binding site" evidence="1">
    <location>
        <position position="202"/>
    </location>
    <ligand>
        <name>Zn(2+)</name>
        <dbReference type="ChEBI" id="CHEBI:29105"/>
    </ligand>
</feature>
<accession>B4RQ61</accession>
<protein>
    <recommendedName>
        <fullName evidence="1">7-cyano-7-deazaguanine synthase</fullName>
        <ecNumber evidence="1">6.3.4.20</ecNumber>
    </recommendedName>
    <alternativeName>
        <fullName evidence="1">7-cyano-7-carbaguanine synthase</fullName>
    </alternativeName>
    <alternativeName>
        <fullName evidence="1">PreQ(0) synthase</fullName>
    </alternativeName>
    <alternativeName>
        <fullName evidence="1">Queuosine biosynthesis protein QueC</fullName>
    </alternativeName>
</protein>
<proteinExistence type="inferred from homology"/>
<organism>
    <name type="scientific">Neisseria gonorrhoeae (strain NCCP11945)</name>
    <dbReference type="NCBI Taxonomy" id="521006"/>
    <lineage>
        <taxon>Bacteria</taxon>
        <taxon>Pseudomonadati</taxon>
        <taxon>Pseudomonadota</taxon>
        <taxon>Betaproteobacteria</taxon>
        <taxon>Neisseriales</taxon>
        <taxon>Neisseriaceae</taxon>
        <taxon>Neisseria</taxon>
    </lineage>
</organism>
<gene>
    <name evidence="1" type="primary">queC</name>
    <name type="ordered locus">NGK_0175</name>
</gene>
<keyword id="KW-0067">ATP-binding</keyword>
<keyword id="KW-0436">Ligase</keyword>
<keyword id="KW-0479">Metal-binding</keyword>
<keyword id="KW-0547">Nucleotide-binding</keyword>
<keyword id="KW-0671">Queuosine biosynthesis</keyword>
<keyword id="KW-0862">Zinc</keyword>
<comment type="function">
    <text evidence="1">Catalyzes the ATP-dependent conversion of 7-carboxy-7-deazaguanine (CDG) to 7-cyano-7-deazaguanine (preQ(0)).</text>
</comment>
<comment type="catalytic activity">
    <reaction evidence="1">
        <text>7-carboxy-7-deazaguanine + NH4(+) + ATP = 7-cyano-7-deazaguanine + ADP + phosphate + H2O + H(+)</text>
        <dbReference type="Rhea" id="RHEA:27982"/>
        <dbReference type="ChEBI" id="CHEBI:15377"/>
        <dbReference type="ChEBI" id="CHEBI:15378"/>
        <dbReference type="ChEBI" id="CHEBI:28938"/>
        <dbReference type="ChEBI" id="CHEBI:30616"/>
        <dbReference type="ChEBI" id="CHEBI:43474"/>
        <dbReference type="ChEBI" id="CHEBI:45075"/>
        <dbReference type="ChEBI" id="CHEBI:61036"/>
        <dbReference type="ChEBI" id="CHEBI:456216"/>
        <dbReference type="EC" id="6.3.4.20"/>
    </reaction>
</comment>
<comment type="cofactor">
    <cofactor evidence="1">
        <name>Zn(2+)</name>
        <dbReference type="ChEBI" id="CHEBI:29105"/>
    </cofactor>
    <text evidence="1">Binds 1 zinc ion per subunit.</text>
</comment>
<comment type="pathway">
    <text evidence="1">Purine metabolism; 7-cyano-7-deazaguanine biosynthesis.</text>
</comment>
<comment type="similarity">
    <text evidence="1">Belongs to the QueC family.</text>
</comment>